<feature type="chain" id="PRO_0000218841" description="Membrane progestin receptor beta">
    <location>
        <begin position="1"/>
        <end position="354"/>
    </location>
</feature>
<feature type="topological domain" description="Cytoplasmic" evidence="2">
    <location>
        <begin position="1"/>
        <end position="76"/>
    </location>
</feature>
<feature type="transmembrane region" description="Helical; Name=1" evidence="2">
    <location>
        <begin position="77"/>
        <end position="97"/>
    </location>
</feature>
<feature type="topological domain" description="Extracellular" evidence="2">
    <location>
        <begin position="98"/>
        <end position="111"/>
    </location>
</feature>
<feature type="transmembrane region" description="Helical; Name=2" evidence="2">
    <location>
        <begin position="112"/>
        <end position="132"/>
    </location>
</feature>
<feature type="topological domain" description="Cytoplasmic" evidence="2">
    <location>
        <begin position="133"/>
        <end position="173"/>
    </location>
</feature>
<feature type="transmembrane region" description="Helical; Name=3" evidence="2">
    <location>
        <begin position="174"/>
        <end position="194"/>
    </location>
</feature>
<feature type="topological domain" description="Extracellular" evidence="2">
    <location>
        <begin position="195"/>
        <end position="213"/>
    </location>
</feature>
<feature type="transmembrane region" description="Helical; Name=4" evidence="2">
    <location>
        <begin position="214"/>
        <end position="234"/>
    </location>
</feature>
<feature type="topological domain" description="Cytoplasmic" evidence="2">
    <location>
        <begin position="235"/>
        <end position="243"/>
    </location>
</feature>
<feature type="transmembrane region" description="Helical; Name=5" evidence="2">
    <location>
        <begin position="244"/>
        <end position="264"/>
    </location>
</feature>
<feature type="topological domain" description="Extracellular" evidence="2">
    <location>
        <begin position="265"/>
        <end position="283"/>
    </location>
</feature>
<feature type="transmembrane region" description="Helical; Name=6" evidence="2">
    <location>
        <begin position="284"/>
        <end position="304"/>
    </location>
</feature>
<feature type="topological domain" description="Cytoplasmic" evidence="2">
    <location>
        <begin position="305"/>
        <end position="315"/>
    </location>
</feature>
<feature type="transmembrane region" description="Helical; Name=7" evidence="2">
    <location>
        <begin position="316"/>
        <end position="336"/>
    </location>
</feature>
<feature type="topological domain" description="Extracellular" evidence="2">
    <location>
        <begin position="337"/>
        <end position="354"/>
    </location>
</feature>
<feature type="sequence conflict" description="In Ref. 3; AAR08385/BAC33221." evidence="6" ref="3">
    <original>D</original>
    <variation>G</variation>
    <location>
        <position position="41"/>
    </location>
</feature>
<feature type="sequence conflict" description="In Ref. 1; AAO47230." evidence="6" ref="1">
    <original>I</original>
    <variation>V</variation>
    <location>
        <position position="116"/>
    </location>
</feature>
<feature type="sequence conflict" description="In Ref. 1; AAO47230." evidence="6" ref="1">
    <original>I</original>
    <variation>L</variation>
    <location>
        <position position="177"/>
    </location>
</feature>
<feature type="sequence conflict" description="In Ref. 1; AAO47230." evidence="6" ref="1">
    <original>T</original>
    <variation>S</variation>
    <location>
        <position position="339"/>
    </location>
</feature>
<name>PAQR8_MOUSE</name>
<organism>
    <name type="scientific">Mus musculus</name>
    <name type="common">Mouse</name>
    <dbReference type="NCBI Taxonomy" id="10090"/>
    <lineage>
        <taxon>Eukaryota</taxon>
        <taxon>Metazoa</taxon>
        <taxon>Chordata</taxon>
        <taxon>Craniata</taxon>
        <taxon>Vertebrata</taxon>
        <taxon>Euteleostomi</taxon>
        <taxon>Mammalia</taxon>
        <taxon>Eutheria</taxon>
        <taxon>Euarchontoglires</taxon>
        <taxon>Glires</taxon>
        <taxon>Rodentia</taxon>
        <taxon>Myomorpha</taxon>
        <taxon>Muroidea</taxon>
        <taxon>Muridae</taxon>
        <taxon>Murinae</taxon>
        <taxon>Mus</taxon>
        <taxon>Mus</taxon>
    </lineage>
</organism>
<accession>Q80ZE5</accession>
<accession>Q3UHI5</accession>
<accession>Q8C891</accession>
<accession>Q8CCW9</accession>
<accession>Q9DA71</accession>
<gene>
    <name evidence="7" type="primary">Paqr8</name>
    <name type="synonym">Mprb</name>
</gene>
<protein>
    <recommendedName>
        <fullName evidence="1">Membrane progestin receptor beta</fullName>
        <shortName evidence="1">mPR beta</shortName>
    </recommendedName>
    <alternativeName>
        <fullName evidence="5">Lysosomal membrane protein in brain 1</fullName>
    </alternativeName>
    <alternativeName>
        <fullName evidence="1">Membrane progesterone P4 receptor beta</fullName>
    </alternativeName>
    <alternativeName>
        <fullName evidence="1">Membrane progesterone receptor beta</fullName>
    </alternativeName>
    <alternativeName>
        <fullName>Progesterone and adipoQ receptor family member 8</fullName>
    </alternativeName>
    <alternativeName>
        <fullName evidence="1">Progestin and adipoQ receptor family member 8</fullName>
    </alternativeName>
    <alternativeName>
        <fullName>Progestin and adipoQ receptor family member VIII</fullName>
    </alternativeName>
</protein>
<reference key="1">
    <citation type="journal article" date="2003" name="Proc. Natl. Acad. Sci. U.S.A.">
        <title>Identification, classification, and partial characterization of genes in humans and other vertebrates homologous to a fish membrane progestin receptor.</title>
        <authorList>
            <person name="Zhu Y."/>
            <person name="Bond J."/>
            <person name="Thomas P."/>
        </authorList>
    </citation>
    <scope>NUCLEOTIDE SEQUENCE [MRNA]</scope>
    <scope>FUNCTION</scope>
    <source>
        <strain>CD-1</strain>
        <tissue>Testis</tissue>
    </source>
</reference>
<reference key="2">
    <citation type="journal article" date="2005" name="J. Mol. Evol.">
        <title>PAQR proteins: a novel membrane receptor family defined by an ancient 7-transmembrane pass motif.</title>
        <authorList>
            <person name="Tang Y.T."/>
            <person name="Hu T."/>
            <person name="Arterburn M."/>
            <person name="Boyle B."/>
            <person name="Bright J.M."/>
            <person name="Emtage P.C."/>
            <person name="Funk W.D."/>
        </authorList>
    </citation>
    <scope>NUCLEOTIDE SEQUENCE [MRNA]</scope>
    <source>
        <strain>C57BL/6J</strain>
    </source>
</reference>
<reference key="3">
    <citation type="journal article" date="2005" name="Science">
        <title>The transcriptional landscape of the mammalian genome.</title>
        <authorList>
            <person name="Carninci P."/>
            <person name="Kasukawa T."/>
            <person name="Katayama S."/>
            <person name="Gough J."/>
            <person name="Frith M.C."/>
            <person name="Maeda N."/>
            <person name="Oyama R."/>
            <person name="Ravasi T."/>
            <person name="Lenhard B."/>
            <person name="Wells C."/>
            <person name="Kodzius R."/>
            <person name="Shimokawa K."/>
            <person name="Bajic V.B."/>
            <person name="Brenner S.E."/>
            <person name="Batalov S."/>
            <person name="Forrest A.R."/>
            <person name="Zavolan M."/>
            <person name="Davis M.J."/>
            <person name="Wilming L.G."/>
            <person name="Aidinis V."/>
            <person name="Allen J.E."/>
            <person name="Ambesi-Impiombato A."/>
            <person name="Apweiler R."/>
            <person name="Aturaliya R.N."/>
            <person name="Bailey T.L."/>
            <person name="Bansal M."/>
            <person name="Baxter L."/>
            <person name="Beisel K.W."/>
            <person name="Bersano T."/>
            <person name="Bono H."/>
            <person name="Chalk A.M."/>
            <person name="Chiu K.P."/>
            <person name="Choudhary V."/>
            <person name="Christoffels A."/>
            <person name="Clutterbuck D.R."/>
            <person name="Crowe M.L."/>
            <person name="Dalla E."/>
            <person name="Dalrymple B.P."/>
            <person name="de Bono B."/>
            <person name="Della Gatta G."/>
            <person name="di Bernardo D."/>
            <person name="Down T."/>
            <person name="Engstrom P."/>
            <person name="Fagiolini M."/>
            <person name="Faulkner G."/>
            <person name="Fletcher C.F."/>
            <person name="Fukushima T."/>
            <person name="Furuno M."/>
            <person name="Futaki S."/>
            <person name="Gariboldi M."/>
            <person name="Georgii-Hemming P."/>
            <person name="Gingeras T.R."/>
            <person name="Gojobori T."/>
            <person name="Green R.E."/>
            <person name="Gustincich S."/>
            <person name="Harbers M."/>
            <person name="Hayashi Y."/>
            <person name="Hensch T.K."/>
            <person name="Hirokawa N."/>
            <person name="Hill D."/>
            <person name="Huminiecki L."/>
            <person name="Iacono M."/>
            <person name="Ikeo K."/>
            <person name="Iwama A."/>
            <person name="Ishikawa T."/>
            <person name="Jakt M."/>
            <person name="Kanapin A."/>
            <person name="Katoh M."/>
            <person name="Kawasawa Y."/>
            <person name="Kelso J."/>
            <person name="Kitamura H."/>
            <person name="Kitano H."/>
            <person name="Kollias G."/>
            <person name="Krishnan S.P."/>
            <person name="Kruger A."/>
            <person name="Kummerfeld S.K."/>
            <person name="Kurochkin I.V."/>
            <person name="Lareau L.F."/>
            <person name="Lazarevic D."/>
            <person name="Lipovich L."/>
            <person name="Liu J."/>
            <person name="Liuni S."/>
            <person name="McWilliam S."/>
            <person name="Madan Babu M."/>
            <person name="Madera M."/>
            <person name="Marchionni L."/>
            <person name="Matsuda H."/>
            <person name="Matsuzawa S."/>
            <person name="Miki H."/>
            <person name="Mignone F."/>
            <person name="Miyake S."/>
            <person name="Morris K."/>
            <person name="Mottagui-Tabar S."/>
            <person name="Mulder N."/>
            <person name="Nakano N."/>
            <person name="Nakauchi H."/>
            <person name="Ng P."/>
            <person name="Nilsson R."/>
            <person name="Nishiguchi S."/>
            <person name="Nishikawa S."/>
            <person name="Nori F."/>
            <person name="Ohara O."/>
            <person name="Okazaki Y."/>
            <person name="Orlando V."/>
            <person name="Pang K.C."/>
            <person name="Pavan W.J."/>
            <person name="Pavesi G."/>
            <person name="Pesole G."/>
            <person name="Petrovsky N."/>
            <person name="Piazza S."/>
            <person name="Reed J."/>
            <person name="Reid J.F."/>
            <person name="Ring B.Z."/>
            <person name="Ringwald M."/>
            <person name="Rost B."/>
            <person name="Ruan Y."/>
            <person name="Salzberg S.L."/>
            <person name="Sandelin A."/>
            <person name="Schneider C."/>
            <person name="Schoenbach C."/>
            <person name="Sekiguchi K."/>
            <person name="Semple C.A."/>
            <person name="Seno S."/>
            <person name="Sessa L."/>
            <person name="Sheng Y."/>
            <person name="Shibata Y."/>
            <person name="Shimada H."/>
            <person name="Shimada K."/>
            <person name="Silva D."/>
            <person name="Sinclair B."/>
            <person name="Sperling S."/>
            <person name="Stupka E."/>
            <person name="Sugiura K."/>
            <person name="Sultana R."/>
            <person name="Takenaka Y."/>
            <person name="Taki K."/>
            <person name="Tammoja K."/>
            <person name="Tan S.L."/>
            <person name="Tang S."/>
            <person name="Taylor M.S."/>
            <person name="Tegner J."/>
            <person name="Teichmann S.A."/>
            <person name="Ueda H.R."/>
            <person name="van Nimwegen E."/>
            <person name="Verardo R."/>
            <person name="Wei C.L."/>
            <person name="Yagi K."/>
            <person name="Yamanishi H."/>
            <person name="Zabarovsky E."/>
            <person name="Zhu S."/>
            <person name="Zimmer A."/>
            <person name="Hide W."/>
            <person name="Bult C."/>
            <person name="Grimmond S.M."/>
            <person name="Teasdale R.D."/>
            <person name="Liu E.T."/>
            <person name="Brusic V."/>
            <person name="Quackenbush J."/>
            <person name="Wahlestedt C."/>
            <person name="Mattick J.S."/>
            <person name="Hume D.A."/>
            <person name="Kai C."/>
            <person name="Sasaki D."/>
            <person name="Tomaru Y."/>
            <person name="Fukuda S."/>
            <person name="Kanamori-Katayama M."/>
            <person name="Suzuki M."/>
            <person name="Aoki J."/>
            <person name="Arakawa T."/>
            <person name="Iida J."/>
            <person name="Imamura K."/>
            <person name="Itoh M."/>
            <person name="Kato T."/>
            <person name="Kawaji H."/>
            <person name="Kawagashira N."/>
            <person name="Kawashima T."/>
            <person name="Kojima M."/>
            <person name="Kondo S."/>
            <person name="Konno H."/>
            <person name="Nakano K."/>
            <person name="Ninomiya N."/>
            <person name="Nishio T."/>
            <person name="Okada M."/>
            <person name="Plessy C."/>
            <person name="Shibata K."/>
            <person name="Shiraki T."/>
            <person name="Suzuki S."/>
            <person name="Tagami M."/>
            <person name="Waki K."/>
            <person name="Watahiki A."/>
            <person name="Okamura-Oho Y."/>
            <person name="Suzuki H."/>
            <person name="Kawai J."/>
            <person name="Hayashizaki Y."/>
        </authorList>
    </citation>
    <scope>NUCLEOTIDE SEQUENCE [LARGE SCALE MRNA]</scope>
    <source>
        <strain>C57BL/6J</strain>
        <tissue>Head</tissue>
        <tissue>Medulla oblongata</tissue>
        <tissue>Testis</tissue>
    </source>
</reference>
<reference key="4">
    <citation type="journal article" date="2004" name="Genome Res.">
        <title>The status, quality, and expansion of the NIH full-length cDNA project: the Mammalian Gene Collection (MGC).</title>
        <authorList>
            <consortium name="The MGC Project Team"/>
        </authorList>
    </citation>
    <scope>NUCLEOTIDE SEQUENCE [LARGE SCALE MRNA]</scope>
    <source>
        <strain>C57BL/6J</strain>
        <tissue>Brain</tissue>
    </source>
</reference>
<reference key="5">
    <citation type="journal article" date="2001" name="Biochem. Biophys. Res. Commun.">
        <title>A novel gene in the chromosomal region for juvenile myoclonic epilepsy on 6p12 encodes a brain-specific lysosomal membrane protein.</title>
        <authorList>
            <person name="Suzuki T."/>
            <person name="Ganesh S."/>
            <person name="Agarwala K.L."/>
            <person name="Morita R."/>
            <person name="Sugimoto Y."/>
            <person name="Inazawa J."/>
            <person name="Delgado-Escueta A.V."/>
            <person name="Yamakawa K."/>
        </authorList>
    </citation>
    <scope>TISSUE SPECIFICITY</scope>
</reference>
<sequence>MTTAILERLSTLSMSGQQLRRLPKILEEGLPKMPCTVPETDVPQLFREPYIHAGYRPTGHEWRYYFFSLFQKHNEVVNVWTHLLAALAVLLRFWAFVEAGALQWASPHTLPLLLFILSSITYLTCSLLAHLLQSKSELSHYTFYFVDYVGVSVYQYGSALAHFFYSSDQAWYELFWIFFLPAAAFCGWLSCAGCCYAKYRYRRPYPVMRKICQVVPAGLAFVLDISPVAHRVALCHLAGCQEQAAWYHTLQILFFLVSAYFFSCPVPEKYFPGSCDIVGHGHQIFHAFLSVCTLSQLEAILLDYQGRHEIFLQRHGPLSVYSACLSFFVLAACSAATATLLRHKVKDRLIKKDS</sequence>
<dbReference type="EMBL" id="AF313617">
    <property type="protein sequence ID" value="AAO47230.1"/>
    <property type="molecule type" value="mRNA"/>
</dbReference>
<dbReference type="EMBL" id="AY424297">
    <property type="protein sequence ID" value="AAR08385.1"/>
    <property type="molecule type" value="mRNA"/>
</dbReference>
<dbReference type="EMBL" id="AK006107">
    <property type="protein sequence ID" value="BAB24412.1"/>
    <property type="molecule type" value="mRNA"/>
</dbReference>
<dbReference type="EMBL" id="AK029772">
    <property type="protein sequence ID" value="BAC26609.1"/>
    <property type="molecule type" value="mRNA"/>
</dbReference>
<dbReference type="EMBL" id="AK031969">
    <property type="protein sequence ID" value="BAC27629.1"/>
    <property type="status" value="ALT_FRAME"/>
    <property type="molecule type" value="mRNA"/>
</dbReference>
<dbReference type="EMBL" id="AK048045">
    <property type="protein sequence ID" value="BAC33221.1"/>
    <property type="molecule type" value="mRNA"/>
</dbReference>
<dbReference type="EMBL" id="AK147376">
    <property type="protein sequence ID" value="BAE27872.1"/>
    <property type="molecule type" value="mRNA"/>
</dbReference>
<dbReference type="EMBL" id="BC059813">
    <property type="protein sequence ID" value="AAH59813.1"/>
    <property type="molecule type" value="mRNA"/>
</dbReference>
<dbReference type="CCDS" id="CCDS14844.1"/>
<dbReference type="RefSeq" id="NP_001342051.1">
    <property type="nucleotide sequence ID" value="NM_001355122.2"/>
</dbReference>
<dbReference type="RefSeq" id="NP_001419870.1">
    <property type="nucleotide sequence ID" value="NM_001432941.1"/>
</dbReference>
<dbReference type="RefSeq" id="NP_001419871.1">
    <property type="nucleotide sequence ID" value="NM_001432942.1"/>
</dbReference>
<dbReference type="RefSeq" id="NP_083105.3">
    <property type="nucleotide sequence ID" value="NM_028829.3"/>
</dbReference>
<dbReference type="RefSeq" id="XP_006495640.1">
    <property type="nucleotide sequence ID" value="XM_006495577.2"/>
</dbReference>
<dbReference type="RefSeq" id="XP_006495641.1">
    <property type="nucleotide sequence ID" value="XM_006495578.3"/>
</dbReference>
<dbReference type="SMR" id="Q80ZE5"/>
<dbReference type="FunCoup" id="Q80ZE5">
    <property type="interactions" value="1175"/>
</dbReference>
<dbReference type="STRING" id="10090.ENSMUSP00000141054"/>
<dbReference type="iPTMnet" id="Q80ZE5"/>
<dbReference type="PhosphoSitePlus" id="Q80ZE5"/>
<dbReference type="jPOST" id="Q80ZE5"/>
<dbReference type="PaxDb" id="10090-ENSMUSP00000141054"/>
<dbReference type="ProteomicsDB" id="294380"/>
<dbReference type="Antibodypedia" id="30905">
    <property type="antibodies" value="108 antibodies from 22 providers"/>
</dbReference>
<dbReference type="DNASU" id="74229"/>
<dbReference type="Ensembl" id="ENSMUST00000068880.14">
    <property type="protein sequence ID" value="ENSMUSP00000069127.8"/>
    <property type="gene ID" value="ENSMUSG00000025931.16"/>
</dbReference>
<dbReference type="Ensembl" id="ENSMUST00000167119.8">
    <property type="protein sequence ID" value="ENSMUSP00000128781.2"/>
    <property type="gene ID" value="ENSMUSG00000025931.16"/>
</dbReference>
<dbReference type="Ensembl" id="ENSMUST00000187651.2">
    <property type="protein sequence ID" value="ENSMUSP00000140913.2"/>
    <property type="gene ID" value="ENSMUSG00000025931.16"/>
</dbReference>
<dbReference type="Ensembl" id="ENSMUST00000189400.7">
    <property type="protein sequence ID" value="ENSMUSP00000141054.2"/>
    <property type="gene ID" value="ENSMUSG00000025931.16"/>
</dbReference>
<dbReference type="GeneID" id="74229"/>
<dbReference type="KEGG" id="mmu:74229"/>
<dbReference type="UCSC" id="uc007ald.1">
    <property type="organism name" value="mouse"/>
</dbReference>
<dbReference type="AGR" id="MGI:1921479"/>
<dbReference type="CTD" id="85315"/>
<dbReference type="MGI" id="MGI:1921479">
    <property type="gene designation" value="Paqr8"/>
</dbReference>
<dbReference type="VEuPathDB" id="HostDB:ENSMUSG00000025931"/>
<dbReference type="eggNOG" id="KOG0748">
    <property type="taxonomic scope" value="Eukaryota"/>
</dbReference>
<dbReference type="GeneTree" id="ENSGT00940000159860"/>
<dbReference type="HOGENOM" id="CLU_052356_0_0_1"/>
<dbReference type="InParanoid" id="Q80ZE5"/>
<dbReference type="OMA" id="QYGCSLG"/>
<dbReference type="OrthoDB" id="535992at2759"/>
<dbReference type="PhylomeDB" id="Q80ZE5"/>
<dbReference type="TreeFam" id="TF319738"/>
<dbReference type="BioGRID-ORCS" id="74229">
    <property type="hits" value="3 hits in 78 CRISPR screens"/>
</dbReference>
<dbReference type="ChiTaRS" id="Paqr8">
    <property type="organism name" value="mouse"/>
</dbReference>
<dbReference type="PRO" id="PR:Q80ZE5"/>
<dbReference type="Proteomes" id="UP000000589">
    <property type="component" value="Chromosome 1"/>
</dbReference>
<dbReference type="RNAct" id="Q80ZE5">
    <property type="molecule type" value="protein"/>
</dbReference>
<dbReference type="Bgee" id="ENSMUSG00000025931">
    <property type="expression patterns" value="Expressed in cerebellar nuclear complex and 185 other cell types or tissues"/>
</dbReference>
<dbReference type="GO" id="GO:0005794">
    <property type="term" value="C:Golgi apparatus"/>
    <property type="evidence" value="ECO:0007669"/>
    <property type="project" value="Ensembl"/>
</dbReference>
<dbReference type="GO" id="GO:0005886">
    <property type="term" value="C:plasma membrane"/>
    <property type="evidence" value="ECO:0007669"/>
    <property type="project" value="UniProtKB-SubCell"/>
</dbReference>
<dbReference type="GO" id="GO:0005496">
    <property type="term" value="F:steroid binding"/>
    <property type="evidence" value="ECO:0007669"/>
    <property type="project" value="UniProtKB-KW"/>
</dbReference>
<dbReference type="GO" id="GO:0048477">
    <property type="term" value="P:oogenesis"/>
    <property type="evidence" value="ECO:0007669"/>
    <property type="project" value="UniProtKB-KW"/>
</dbReference>
<dbReference type="InterPro" id="IPR004254">
    <property type="entry name" value="AdipoR/HlyIII-related"/>
</dbReference>
<dbReference type="PANTHER" id="PTHR20855">
    <property type="entry name" value="ADIPOR/PROGESTIN RECEPTOR-RELATED"/>
    <property type="match status" value="1"/>
</dbReference>
<dbReference type="PANTHER" id="PTHR20855:SF22">
    <property type="entry name" value="MEMBRANE PROGESTIN RECEPTOR BETA"/>
    <property type="match status" value="1"/>
</dbReference>
<dbReference type="Pfam" id="PF03006">
    <property type="entry name" value="HlyIII"/>
    <property type="match status" value="1"/>
</dbReference>
<proteinExistence type="evidence at transcript level"/>
<comment type="function">
    <text evidence="1 4">Plasma membrane progesterone (P4) receptor coupled to G proteins. Seems to act through a G(i) mediated pathway (By similarity). May be involved in oocyte maturation (PubMed:12601167). Also binds dehydroepiandrosterone (DHEA), pregnanolone, pregnenolone and allopregnanolone (By similarity).</text>
</comment>
<comment type="subcellular location">
    <subcellularLocation>
        <location evidence="1">Cell membrane</location>
        <topology evidence="2">Multi-pass membrane protein</topology>
    </subcellularLocation>
    <text evidence="1">Colocalizes with a lysosomal protein CTSD/cathepsin D.</text>
</comment>
<comment type="tissue specificity">
    <text evidence="3">Expressed in brain and testis.</text>
</comment>
<comment type="miscellaneous">
    <text evidence="1">Non-classical progesterone receptors involved in extranuclear signaling are classified in 2 groups: the class II progestin and adipoQ receptor (PAQR) family (also called mPRs) (PAQR5, PAQR6, PAQR7, PAQR8 and PAQR9) and the b5-like heme/steroid-binding protein family (also called MAPRs) (PGRMC1, PGRMC2, NENF and CYB5D2).</text>
</comment>
<comment type="similarity">
    <text evidence="6">Belongs to the ADIPOR family.</text>
</comment>
<comment type="sequence caution" evidence="6">
    <conflict type="frameshift">
        <sequence resource="EMBL-CDS" id="BAC27629"/>
    </conflict>
</comment>
<keyword id="KW-1003">Cell membrane</keyword>
<keyword id="KW-0217">Developmental protein</keyword>
<keyword id="KW-0221">Differentiation</keyword>
<keyword id="KW-0446">Lipid-binding</keyword>
<keyword id="KW-0472">Membrane</keyword>
<keyword id="KW-0896">Oogenesis</keyword>
<keyword id="KW-0675">Receptor</keyword>
<keyword id="KW-1185">Reference proteome</keyword>
<keyword id="KW-0754">Steroid-binding</keyword>
<keyword id="KW-0812">Transmembrane</keyword>
<keyword id="KW-1133">Transmembrane helix</keyword>
<evidence type="ECO:0000250" key="1">
    <source>
        <dbReference type="UniProtKB" id="Q8TEZ7"/>
    </source>
</evidence>
<evidence type="ECO:0000255" key="2"/>
<evidence type="ECO:0000269" key="3">
    <source>
    </source>
</evidence>
<evidence type="ECO:0000269" key="4">
    <source>
    </source>
</evidence>
<evidence type="ECO:0000303" key="5">
    <source>
    </source>
</evidence>
<evidence type="ECO:0000305" key="6"/>
<evidence type="ECO:0000312" key="7">
    <source>
        <dbReference type="MGI" id="MGI:1921479"/>
    </source>
</evidence>